<gene>
    <name evidence="1" type="primary">glgB</name>
    <name type="ordered locus">RPD_3484</name>
</gene>
<organism>
    <name type="scientific">Rhodopseudomonas palustris (strain BisB5)</name>
    <dbReference type="NCBI Taxonomy" id="316057"/>
    <lineage>
        <taxon>Bacteria</taxon>
        <taxon>Pseudomonadati</taxon>
        <taxon>Pseudomonadota</taxon>
        <taxon>Alphaproteobacteria</taxon>
        <taxon>Hyphomicrobiales</taxon>
        <taxon>Nitrobacteraceae</taxon>
        <taxon>Rhodopseudomonas</taxon>
    </lineage>
</organism>
<feature type="chain" id="PRO_0000260690" description="1,4-alpha-glucan branching enzyme GlgB">
    <location>
        <begin position="1"/>
        <end position="716"/>
    </location>
</feature>
<feature type="active site" description="Nucleophile" evidence="1">
    <location>
        <position position="399"/>
    </location>
</feature>
<feature type="active site" description="Proton donor" evidence="1">
    <location>
        <position position="452"/>
    </location>
</feature>
<sequence>MTVQLTDEAYAVLEGRHADPFHYLGPHSEDNRVVVRALLPDATAVEAVGEHGETAHLERVHESGLFAGSLPNGSHRYQLRARFGDTTVDLEDPYRFPPILTDFDLYLLGEGTDQRLYDKLGAHPMALEGVNGVAFVVLAPNARRVSVVGDFNFWNPRRHQMRVRGNGYWELFVPGAAAGDHYKFDVVGPHGEQLPQKSDPMAFAAELRPKTASIVVDQTRLPQPRPAPAQINALGAPMSIYEVHLGSWRRKDGEQWLSYRELAETLPAYVREMGFTHVEFLPVSEHPFDGSWGYQPTGLYAPTSRFGTPEDFCALIDAFHAQGIGVLLDWVPGHFPDDPHGLGHFDGTALYEHANPLQGRHLDWGTLIYNYGRTEVVNFLVSNALFWLERYGIDGLRVDAVASMLYLDYSRPADGWVPNKFGGRENIEAIDFLRRFNAEVFAKFPHVTTAAEESTAWPQVSRPVEFGGLGFGYKWNMGWMHDTLNYISKDPIHRKFHHGQILFGLHYAFSENFILPLSHDEVVHGKRSILGRMPGDEWQRFANLRAYYAFMFAHPGKKLMFMGSEFGQEREWNHDRSLDWHLLDTPKYAGIQALVRDLNRLYRTLPALHQLDCDPFGFEWLVTDDADRNVFAWMRKGDDPRARCLVIANFSPNVYEDYRVRVPFPGRWREALNSDSAVYGGSNVGNAGEVHTLDGLVPELSLTIPPLAAIFLTPED</sequence>
<evidence type="ECO:0000255" key="1">
    <source>
        <dbReference type="HAMAP-Rule" id="MF_00685"/>
    </source>
</evidence>
<protein>
    <recommendedName>
        <fullName evidence="1">1,4-alpha-glucan branching enzyme GlgB</fullName>
        <ecNumber evidence="1">2.4.1.18</ecNumber>
    </recommendedName>
    <alternativeName>
        <fullName evidence="1">1,4-alpha-D-glucan:1,4-alpha-D-glucan 6-glucosyl-transferase</fullName>
    </alternativeName>
    <alternativeName>
        <fullName evidence="1">Alpha-(1-&gt;4)-glucan branching enzyme</fullName>
    </alternativeName>
    <alternativeName>
        <fullName evidence="1">Glycogen branching enzyme</fullName>
        <shortName evidence="1">BE</shortName>
    </alternativeName>
</protein>
<proteinExistence type="inferred from homology"/>
<name>GLGB_RHOPS</name>
<reference key="1">
    <citation type="submission" date="2006-03" db="EMBL/GenBank/DDBJ databases">
        <title>Complete sequence of Rhodopseudomonas palustris BisB5.</title>
        <authorList>
            <consortium name="US DOE Joint Genome Institute"/>
            <person name="Copeland A."/>
            <person name="Lucas S."/>
            <person name="Lapidus A."/>
            <person name="Barry K."/>
            <person name="Detter J.C."/>
            <person name="Glavina del Rio T."/>
            <person name="Hammon N."/>
            <person name="Israni S."/>
            <person name="Dalin E."/>
            <person name="Tice H."/>
            <person name="Pitluck S."/>
            <person name="Chain P."/>
            <person name="Malfatti S."/>
            <person name="Shin M."/>
            <person name="Vergez L."/>
            <person name="Schmutz J."/>
            <person name="Larimer F."/>
            <person name="Land M."/>
            <person name="Hauser L."/>
            <person name="Pelletier D.A."/>
            <person name="Kyrpides N."/>
            <person name="Lykidis A."/>
            <person name="Oda Y."/>
            <person name="Harwood C.S."/>
            <person name="Richardson P."/>
        </authorList>
    </citation>
    <scope>NUCLEOTIDE SEQUENCE [LARGE SCALE GENOMIC DNA]</scope>
    <source>
        <strain>BisB5</strain>
    </source>
</reference>
<comment type="function">
    <text evidence="1">Catalyzes the formation of the alpha-1,6-glucosidic linkages in glycogen by scission of a 1,4-alpha-linked oligosaccharide from growing alpha-1,4-glucan chains and the subsequent attachment of the oligosaccharide to the alpha-1,6 position.</text>
</comment>
<comment type="catalytic activity">
    <reaction evidence="1">
        <text>Transfers a segment of a (1-&gt;4)-alpha-D-glucan chain to a primary hydroxy group in a similar glucan chain.</text>
        <dbReference type="EC" id="2.4.1.18"/>
    </reaction>
</comment>
<comment type="pathway">
    <text evidence="1">Glycan biosynthesis; glycogen biosynthesis.</text>
</comment>
<comment type="subunit">
    <text evidence="1">Monomer.</text>
</comment>
<comment type="similarity">
    <text evidence="1">Belongs to the glycosyl hydrolase 13 family. GlgB subfamily.</text>
</comment>
<dbReference type="EC" id="2.4.1.18" evidence="1"/>
<dbReference type="EMBL" id="CP000283">
    <property type="protein sequence ID" value="ABE40707.1"/>
    <property type="molecule type" value="Genomic_DNA"/>
</dbReference>
<dbReference type="SMR" id="Q133N2"/>
<dbReference type="STRING" id="316057.RPD_3484"/>
<dbReference type="CAZy" id="CBM48">
    <property type="family name" value="Carbohydrate-Binding Module Family 48"/>
</dbReference>
<dbReference type="CAZy" id="GH13">
    <property type="family name" value="Glycoside Hydrolase Family 13"/>
</dbReference>
<dbReference type="KEGG" id="rpd:RPD_3484"/>
<dbReference type="eggNOG" id="COG0296">
    <property type="taxonomic scope" value="Bacteria"/>
</dbReference>
<dbReference type="HOGENOM" id="CLU_004245_3_2_5"/>
<dbReference type="BioCyc" id="RPAL316057:RPD_RS17520-MONOMER"/>
<dbReference type="UniPathway" id="UPA00164"/>
<dbReference type="Proteomes" id="UP000001818">
    <property type="component" value="Chromosome"/>
</dbReference>
<dbReference type="GO" id="GO:0005829">
    <property type="term" value="C:cytosol"/>
    <property type="evidence" value="ECO:0007669"/>
    <property type="project" value="TreeGrafter"/>
</dbReference>
<dbReference type="GO" id="GO:0003844">
    <property type="term" value="F:1,4-alpha-glucan branching enzyme activity"/>
    <property type="evidence" value="ECO:0007669"/>
    <property type="project" value="UniProtKB-UniRule"/>
</dbReference>
<dbReference type="GO" id="GO:0043169">
    <property type="term" value="F:cation binding"/>
    <property type="evidence" value="ECO:0007669"/>
    <property type="project" value="InterPro"/>
</dbReference>
<dbReference type="GO" id="GO:0004553">
    <property type="term" value="F:hydrolase activity, hydrolyzing O-glycosyl compounds"/>
    <property type="evidence" value="ECO:0007669"/>
    <property type="project" value="InterPro"/>
</dbReference>
<dbReference type="GO" id="GO:0005978">
    <property type="term" value="P:glycogen biosynthetic process"/>
    <property type="evidence" value="ECO:0007669"/>
    <property type="project" value="UniProtKB-UniRule"/>
</dbReference>
<dbReference type="CDD" id="cd11322">
    <property type="entry name" value="AmyAc_Glg_BE"/>
    <property type="match status" value="1"/>
</dbReference>
<dbReference type="CDD" id="cd02855">
    <property type="entry name" value="E_set_GBE_prok_N"/>
    <property type="match status" value="1"/>
</dbReference>
<dbReference type="FunFam" id="2.60.40.10:FF:000169">
    <property type="entry name" value="1,4-alpha-glucan branching enzyme GlgB"/>
    <property type="match status" value="1"/>
</dbReference>
<dbReference type="FunFam" id="2.60.40.1180:FF:000002">
    <property type="entry name" value="1,4-alpha-glucan branching enzyme GlgB"/>
    <property type="match status" value="1"/>
</dbReference>
<dbReference type="FunFam" id="3.20.20.80:FF:000003">
    <property type="entry name" value="1,4-alpha-glucan branching enzyme GlgB"/>
    <property type="match status" value="1"/>
</dbReference>
<dbReference type="Gene3D" id="3.20.20.80">
    <property type="entry name" value="Glycosidases"/>
    <property type="match status" value="1"/>
</dbReference>
<dbReference type="Gene3D" id="2.60.40.1180">
    <property type="entry name" value="Golgi alpha-mannosidase II"/>
    <property type="match status" value="1"/>
</dbReference>
<dbReference type="Gene3D" id="2.60.40.10">
    <property type="entry name" value="Immunoglobulins"/>
    <property type="match status" value="2"/>
</dbReference>
<dbReference type="HAMAP" id="MF_00685">
    <property type="entry name" value="GlgB"/>
    <property type="match status" value="1"/>
</dbReference>
<dbReference type="InterPro" id="IPR006048">
    <property type="entry name" value="A-amylase/branching_C"/>
</dbReference>
<dbReference type="InterPro" id="IPR037439">
    <property type="entry name" value="Branching_enzy"/>
</dbReference>
<dbReference type="InterPro" id="IPR006407">
    <property type="entry name" value="GlgB"/>
</dbReference>
<dbReference type="InterPro" id="IPR054169">
    <property type="entry name" value="GlgB_N"/>
</dbReference>
<dbReference type="InterPro" id="IPR044143">
    <property type="entry name" value="GlgB_N_E_set_prok"/>
</dbReference>
<dbReference type="InterPro" id="IPR006047">
    <property type="entry name" value="Glyco_hydro_13_cat_dom"/>
</dbReference>
<dbReference type="InterPro" id="IPR004193">
    <property type="entry name" value="Glyco_hydro_13_N"/>
</dbReference>
<dbReference type="InterPro" id="IPR013780">
    <property type="entry name" value="Glyco_hydro_b"/>
</dbReference>
<dbReference type="InterPro" id="IPR017853">
    <property type="entry name" value="Glycoside_hydrolase_SF"/>
</dbReference>
<dbReference type="InterPro" id="IPR013783">
    <property type="entry name" value="Ig-like_fold"/>
</dbReference>
<dbReference type="InterPro" id="IPR014756">
    <property type="entry name" value="Ig_E-set"/>
</dbReference>
<dbReference type="NCBIfam" id="TIGR01515">
    <property type="entry name" value="branching_enzym"/>
    <property type="match status" value="1"/>
</dbReference>
<dbReference type="NCBIfam" id="NF003811">
    <property type="entry name" value="PRK05402.1"/>
    <property type="match status" value="1"/>
</dbReference>
<dbReference type="NCBIfam" id="NF008967">
    <property type="entry name" value="PRK12313.1"/>
    <property type="match status" value="1"/>
</dbReference>
<dbReference type="PANTHER" id="PTHR43651">
    <property type="entry name" value="1,4-ALPHA-GLUCAN-BRANCHING ENZYME"/>
    <property type="match status" value="1"/>
</dbReference>
<dbReference type="PANTHER" id="PTHR43651:SF3">
    <property type="entry name" value="1,4-ALPHA-GLUCAN-BRANCHING ENZYME"/>
    <property type="match status" value="1"/>
</dbReference>
<dbReference type="Pfam" id="PF00128">
    <property type="entry name" value="Alpha-amylase"/>
    <property type="match status" value="1"/>
</dbReference>
<dbReference type="Pfam" id="PF02806">
    <property type="entry name" value="Alpha-amylase_C"/>
    <property type="match status" value="1"/>
</dbReference>
<dbReference type="Pfam" id="PF02922">
    <property type="entry name" value="CBM_48"/>
    <property type="match status" value="1"/>
</dbReference>
<dbReference type="Pfam" id="PF22019">
    <property type="entry name" value="GlgB_N"/>
    <property type="match status" value="1"/>
</dbReference>
<dbReference type="PIRSF" id="PIRSF000463">
    <property type="entry name" value="GlgB"/>
    <property type="match status" value="1"/>
</dbReference>
<dbReference type="SMART" id="SM00642">
    <property type="entry name" value="Aamy"/>
    <property type="match status" value="1"/>
</dbReference>
<dbReference type="SUPFAM" id="SSF51445">
    <property type="entry name" value="(Trans)glycosidases"/>
    <property type="match status" value="1"/>
</dbReference>
<dbReference type="SUPFAM" id="SSF81296">
    <property type="entry name" value="E set domains"/>
    <property type="match status" value="1"/>
</dbReference>
<dbReference type="SUPFAM" id="SSF51011">
    <property type="entry name" value="Glycosyl hydrolase domain"/>
    <property type="match status" value="1"/>
</dbReference>
<keyword id="KW-0119">Carbohydrate metabolism</keyword>
<keyword id="KW-0320">Glycogen biosynthesis</keyword>
<keyword id="KW-0321">Glycogen metabolism</keyword>
<keyword id="KW-0328">Glycosyltransferase</keyword>
<keyword id="KW-0808">Transferase</keyword>
<accession>Q133N2</accession>